<sequence>MSALETQALGMIPMVIEQSGRGERSYDIYSRLLKERVIFLVGEVNDQTANLVVAQLLFLESENPDKDISFYINSPGGSVTAGMAIYDTMQFIKPDVSTLCCGFAASMGAFLLAAGAKGKRYSLPNSKIMIHQVLGGARGQATDIEIHARDILRTKDQMNRILAERTGQPIEKVKADTERDYFMTADEAKDYGIVDQVIAKRP</sequence>
<keyword id="KW-0963">Cytoplasm</keyword>
<keyword id="KW-0378">Hydrolase</keyword>
<keyword id="KW-0645">Protease</keyword>
<keyword id="KW-1185">Reference proteome</keyword>
<keyword id="KW-0720">Serine protease</keyword>
<feature type="chain" id="PRO_1000135153" description="ATP-dependent Clp protease proteolytic subunit">
    <location>
        <begin position="1"/>
        <end position="202"/>
    </location>
</feature>
<feature type="active site" description="Nucleophile" evidence="1">
    <location>
        <position position="106"/>
    </location>
</feature>
<feature type="active site" evidence="1">
    <location>
        <position position="131"/>
    </location>
</feature>
<organism>
    <name type="scientific">Acidovorax ebreus (strain TPSY)</name>
    <name type="common">Diaphorobacter sp. (strain TPSY)</name>
    <dbReference type="NCBI Taxonomy" id="535289"/>
    <lineage>
        <taxon>Bacteria</taxon>
        <taxon>Pseudomonadati</taxon>
        <taxon>Pseudomonadota</taxon>
        <taxon>Betaproteobacteria</taxon>
        <taxon>Burkholderiales</taxon>
        <taxon>Comamonadaceae</taxon>
        <taxon>Diaphorobacter</taxon>
    </lineage>
</organism>
<proteinExistence type="inferred from homology"/>
<accession>B9MG14</accession>
<protein>
    <recommendedName>
        <fullName evidence="1">ATP-dependent Clp protease proteolytic subunit</fullName>
        <ecNumber evidence="1">3.4.21.92</ecNumber>
    </recommendedName>
    <alternativeName>
        <fullName evidence="1">Endopeptidase Clp</fullName>
    </alternativeName>
</protein>
<name>CLPP_ACIET</name>
<reference key="1">
    <citation type="submission" date="2009-01" db="EMBL/GenBank/DDBJ databases">
        <title>Complete sequence of Diaphorobacter sp. TPSY.</title>
        <authorList>
            <consortium name="US DOE Joint Genome Institute"/>
            <person name="Lucas S."/>
            <person name="Copeland A."/>
            <person name="Lapidus A."/>
            <person name="Glavina del Rio T."/>
            <person name="Tice H."/>
            <person name="Bruce D."/>
            <person name="Goodwin L."/>
            <person name="Pitluck S."/>
            <person name="Chertkov O."/>
            <person name="Brettin T."/>
            <person name="Detter J.C."/>
            <person name="Han C."/>
            <person name="Larimer F."/>
            <person name="Land M."/>
            <person name="Hauser L."/>
            <person name="Kyrpides N."/>
            <person name="Mikhailova N."/>
            <person name="Coates J.D."/>
        </authorList>
    </citation>
    <scope>NUCLEOTIDE SEQUENCE [LARGE SCALE GENOMIC DNA]</scope>
    <source>
        <strain>TPSY</strain>
    </source>
</reference>
<dbReference type="EC" id="3.4.21.92" evidence="1"/>
<dbReference type="EMBL" id="CP001392">
    <property type="protein sequence ID" value="ACM32605.1"/>
    <property type="molecule type" value="Genomic_DNA"/>
</dbReference>
<dbReference type="RefSeq" id="WP_015912823.1">
    <property type="nucleotide sequence ID" value="NC_011992.1"/>
</dbReference>
<dbReference type="SMR" id="B9MG14"/>
<dbReference type="MEROPS" id="S14.001"/>
<dbReference type="GeneID" id="84682076"/>
<dbReference type="KEGG" id="dia:Dtpsy_1128"/>
<dbReference type="eggNOG" id="COG0740">
    <property type="taxonomic scope" value="Bacteria"/>
</dbReference>
<dbReference type="HOGENOM" id="CLU_058707_3_2_4"/>
<dbReference type="Proteomes" id="UP000000450">
    <property type="component" value="Chromosome"/>
</dbReference>
<dbReference type="GO" id="GO:0005737">
    <property type="term" value="C:cytoplasm"/>
    <property type="evidence" value="ECO:0007669"/>
    <property type="project" value="UniProtKB-SubCell"/>
</dbReference>
<dbReference type="GO" id="GO:0009368">
    <property type="term" value="C:endopeptidase Clp complex"/>
    <property type="evidence" value="ECO:0007669"/>
    <property type="project" value="TreeGrafter"/>
</dbReference>
<dbReference type="GO" id="GO:0004176">
    <property type="term" value="F:ATP-dependent peptidase activity"/>
    <property type="evidence" value="ECO:0007669"/>
    <property type="project" value="InterPro"/>
</dbReference>
<dbReference type="GO" id="GO:0051117">
    <property type="term" value="F:ATPase binding"/>
    <property type="evidence" value="ECO:0007669"/>
    <property type="project" value="TreeGrafter"/>
</dbReference>
<dbReference type="GO" id="GO:0004252">
    <property type="term" value="F:serine-type endopeptidase activity"/>
    <property type="evidence" value="ECO:0007669"/>
    <property type="project" value="UniProtKB-UniRule"/>
</dbReference>
<dbReference type="GO" id="GO:0006515">
    <property type="term" value="P:protein quality control for misfolded or incompletely synthesized proteins"/>
    <property type="evidence" value="ECO:0007669"/>
    <property type="project" value="TreeGrafter"/>
</dbReference>
<dbReference type="CDD" id="cd07017">
    <property type="entry name" value="S14_ClpP_2"/>
    <property type="match status" value="1"/>
</dbReference>
<dbReference type="FunFam" id="3.90.226.10:FF:000001">
    <property type="entry name" value="ATP-dependent Clp protease proteolytic subunit"/>
    <property type="match status" value="1"/>
</dbReference>
<dbReference type="Gene3D" id="3.90.226.10">
    <property type="entry name" value="2-enoyl-CoA Hydratase, Chain A, domain 1"/>
    <property type="match status" value="1"/>
</dbReference>
<dbReference type="HAMAP" id="MF_00444">
    <property type="entry name" value="ClpP"/>
    <property type="match status" value="1"/>
</dbReference>
<dbReference type="InterPro" id="IPR001907">
    <property type="entry name" value="ClpP"/>
</dbReference>
<dbReference type="InterPro" id="IPR029045">
    <property type="entry name" value="ClpP/crotonase-like_dom_sf"/>
</dbReference>
<dbReference type="InterPro" id="IPR023562">
    <property type="entry name" value="ClpP/TepA"/>
</dbReference>
<dbReference type="NCBIfam" id="TIGR00493">
    <property type="entry name" value="clpP"/>
    <property type="match status" value="1"/>
</dbReference>
<dbReference type="NCBIfam" id="NF001368">
    <property type="entry name" value="PRK00277.1"/>
    <property type="match status" value="1"/>
</dbReference>
<dbReference type="NCBIfam" id="NF009205">
    <property type="entry name" value="PRK12553.1"/>
    <property type="match status" value="1"/>
</dbReference>
<dbReference type="PANTHER" id="PTHR10381">
    <property type="entry name" value="ATP-DEPENDENT CLP PROTEASE PROTEOLYTIC SUBUNIT"/>
    <property type="match status" value="1"/>
</dbReference>
<dbReference type="PANTHER" id="PTHR10381:SF70">
    <property type="entry name" value="ATP-DEPENDENT CLP PROTEASE PROTEOLYTIC SUBUNIT"/>
    <property type="match status" value="1"/>
</dbReference>
<dbReference type="Pfam" id="PF00574">
    <property type="entry name" value="CLP_protease"/>
    <property type="match status" value="1"/>
</dbReference>
<dbReference type="PRINTS" id="PR00127">
    <property type="entry name" value="CLPPROTEASEP"/>
</dbReference>
<dbReference type="SUPFAM" id="SSF52096">
    <property type="entry name" value="ClpP/crotonase"/>
    <property type="match status" value="1"/>
</dbReference>
<comment type="function">
    <text evidence="1">Cleaves peptides in various proteins in a process that requires ATP hydrolysis. Has a chymotrypsin-like activity. Plays a major role in the degradation of misfolded proteins.</text>
</comment>
<comment type="catalytic activity">
    <reaction evidence="1">
        <text>Hydrolysis of proteins to small peptides in the presence of ATP and magnesium. alpha-casein is the usual test substrate. In the absence of ATP, only oligopeptides shorter than five residues are hydrolyzed (such as succinyl-Leu-Tyr-|-NHMec, and Leu-Tyr-Leu-|-Tyr-Trp, in which cleavage of the -Tyr-|-Leu- and -Tyr-|-Trp bonds also occurs).</text>
        <dbReference type="EC" id="3.4.21.92"/>
    </reaction>
</comment>
<comment type="subunit">
    <text evidence="1">Fourteen ClpP subunits assemble into 2 heptameric rings which stack back to back to give a disk-like structure with a central cavity, resembling the structure of eukaryotic proteasomes.</text>
</comment>
<comment type="subcellular location">
    <subcellularLocation>
        <location evidence="1">Cytoplasm</location>
    </subcellularLocation>
</comment>
<comment type="similarity">
    <text evidence="1">Belongs to the peptidase S14 family.</text>
</comment>
<gene>
    <name evidence="1" type="primary">clpP</name>
    <name type="ordered locus">Dtpsy_1128</name>
</gene>
<evidence type="ECO:0000255" key="1">
    <source>
        <dbReference type="HAMAP-Rule" id="MF_00444"/>
    </source>
</evidence>